<feature type="chain" id="PRO_0000420705" description="Transcription factor E2F7">
    <location>
        <begin position="1"/>
        <end position="902"/>
    </location>
</feature>
<feature type="DNA-binding region" evidence="3">
    <location>
        <begin position="143"/>
        <end position="212"/>
    </location>
</feature>
<feature type="DNA-binding region" evidence="3">
    <location>
        <begin position="283"/>
        <end position="368"/>
    </location>
</feature>
<feature type="region of interest" description="Disordered" evidence="4">
    <location>
        <begin position="253"/>
        <end position="283"/>
    </location>
</feature>
<feature type="region of interest" description="Disordered" evidence="4">
    <location>
        <begin position="418"/>
        <end position="439"/>
    </location>
</feature>
<feature type="region of interest" description="Disordered" evidence="4">
    <location>
        <begin position="589"/>
        <end position="627"/>
    </location>
</feature>
<feature type="region of interest" description="Disordered" evidence="4">
    <location>
        <begin position="665"/>
        <end position="690"/>
    </location>
</feature>
<feature type="region of interest" description="Disordered" evidence="4">
    <location>
        <begin position="844"/>
        <end position="902"/>
    </location>
</feature>
<feature type="compositionally biased region" description="Basic and acidic residues" evidence="4">
    <location>
        <begin position="253"/>
        <end position="269"/>
    </location>
</feature>
<feature type="compositionally biased region" description="Basic and acidic residues" evidence="4">
    <location>
        <begin position="589"/>
        <end position="611"/>
    </location>
</feature>
<feature type="compositionally biased region" description="Basic and acidic residues" evidence="4">
    <location>
        <begin position="679"/>
        <end position="690"/>
    </location>
</feature>
<feature type="compositionally biased region" description="Polar residues" evidence="4">
    <location>
        <begin position="884"/>
        <end position="902"/>
    </location>
</feature>
<feature type="modified residue" description="Phosphoserine" evidence="2">
    <location>
        <position position="96"/>
    </location>
</feature>
<feature type="modified residue" description="Phosphoserine" evidence="2">
    <location>
        <position position="411"/>
    </location>
</feature>
<feature type="modified residue" description="Phosphoserine" evidence="2">
    <location>
        <position position="832"/>
    </location>
</feature>
<keyword id="KW-0010">Activator</keyword>
<keyword id="KW-0131">Cell cycle</keyword>
<keyword id="KW-0227">DNA damage</keyword>
<keyword id="KW-0238">DNA-binding</keyword>
<keyword id="KW-0539">Nucleus</keyword>
<keyword id="KW-0597">Phosphoprotein</keyword>
<keyword id="KW-1185">Reference proteome</keyword>
<keyword id="KW-0678">Repressor</keyword>
<keyword id="KW-0804">Transcription</keyword>
<keyword id="KW-0805">Transcription regulation</keyword>
<dbReference type="RefSeq" id="NP_001101562.2">
    <property type="nucleotide sequence ID" value="NM_001108092.2"/>
</dbReference>
<dbReference type="RefSeq" id="XP_006241382.1">
    <property type="nucleotide sequence ID" value="XM_006241320.2"/>
</dbReference>
<dbReference type="RefSeq" id="XP_006241383.1">
    <property type="nucleotide sequence ID" value="XM_006241321.4"/>
</dbReference>
<dbReference type="SMR" id="D4A4D7"/>
<dbReference type="FunCoup" id="D4A4D7">
    <property type="interactions" value="639"/>
</dbReference>
<dbReference type="STRING" id="10116.ENSRNOP00000030798"/>
<dbReference type="GlyGen" id="D4A4D7">
    <property type="glycosylation" value="1 site"/>
</dbReference>
<dbReference type="PhosphoSitePlus" id="D4A4D7"/>
<dbReference type="PaxDb" id="10116-ENSRNOP00000030798"/>
<dbReference type="Ensembl" id="ENSRNOT00000104778.1">
    <property type="protein sequence ID" value="ENSRNOP00000081093.1"/>
    <property type="gene ID" value="ENSRNOG00000026252.6"/>
</dbReference>
<dbReference type="GeneID" id="314818"/>
<dbReference type="UCSC" id="RGD:1310258">
    <property type="organism name" value="rat"/>
</dbReference>
<dbReference type="AGR" id="RGD:1310258"/>
<dbReference type="CTD" id="144455"/>
<dbReference type="RGD" id="1310258">
    <property type="gene designation" value="E2f7"/>
</dbReference>
<dbReference type="eggNOG" id="KOG2578">
    <property type="taxonomic scope" value="Eukaryota"/>
</dbReference>
<dbReference type="GeneTree" id="ENSGT00940000157713"/>
<dbReference type="InParanoid" id="D4A4D7"/>
<dbReference type="PhylomeDB" id="D4A4D7"/>
<dbReference type="TreeFam" id="TF105567"/>
<dbReference type="Reactome" id="R-RNO-6804116">
    <property type="pathway name" value="TP53 Regulates Transcription of Genes Involved in G1 Cell Cycle Arrest"/>
</dbReference>
<dbReference type="PRO" id="PR:D4A4D7"/>
<dbReference type="Proteomes" id="UP000002494">
    <property type="component" value="Chromosome 7"/>
</dbReference>
<dbReference type="GO" id="GO:0016607">
    <property type="term" value="C:nuclear speck"/>
    <property type="evidence" value="ECO:0007669"/>
    <property type="project" value="Ensembl"/>
</dbReference>
<dbReference type="GO" id="GO:0005634">
    <property type="term" value="C:nucleus"/>
    <property type="evidence" value="ECO:0000266"/>
    <property type="project" value="RGD"/>
</dbReference>
<dbReference type="GO" id="GO:0090575">
    <property type="term" value="C:RNA polymerase II transcription regulator complex"/>
    <property type="evidence" value="ECO:0000318"/>
    <property type="project" value="GO_Central"/>
</dbReference>
<dbReference type="GO" id="GO:0000987">
    <property type="term" value="F:cis-regulatory region sequence-specific DNA binding"/>
    <property type="evidence" value="ECO:0000266"/>
    <property type="project" value="RGD"/>
</dbReference>
<dbReference type="GO" id="GO:0003700">
    <property type="term" value="F:DNA-binding transcription factor activity"/>
    <property type="evidence" value="ECO:0000250"/>
    <property type="project" value="UniProtKB"/>
</dbReference>
<dbReference type="GO" id="GO:0000981">
    <property type="term" value="F:DNA-binding transcription factor activity, RNA polymerase II-specific"/>
    <property type="evidence" value="ECO:0000318"/>
    <property type="project" value="GO_Central"/>
</dbReference>
<dbReference type="GO" id="GO:0001217">
    <property type="term" value="F:DNA-binding transcription repressor activity"/>
    <property type="evidence" value="ECO:0000250"/>
    <property type="project" value="UniProtKB"/>
</dbReference>
<dbReference type="GO" id="GO:0001227">
    <property type="term" value="F:DNA-binding transcription repressor activity, RNA polymerase II-specific"/>
    <property type="evidence" value="ECO:0000266"/>
    <property type="project" value="RGD"/>
</dbReference>
<dbReference type="GO" id="GO:0042802">
    <property type="term" value="F:identical protein binding"/>
    <property type="evidence" value="ECO:0000266"/>
    <property type="project" value="RGD"/>
</dbReference>
<dbReference type="GO" id="GO:0000978">
    <property type="term" value="F:RNA polymerase II cis-regulatory region sequence-specific DNA binding"/>
    <property type="evidence" value="ECO:0000250"/>
    <property type="project" value="UniProtKB"/>
</dbReference>
<dbReference type="GO" id="GO:0000977">
    <property type="term" value="F:RNA polymerase II transcription regulatory region sequence-specific DNA binding"/>
    <property type="evidence" value="ECO:0000266"/>
    <property type="project" value="RGD"/>
</dbReference>
<dbReference type="GO" id="GO:1990837">
    <property type="term" value="F:sequence-specific double-stranded DNA binding"/>
    <property type="evidence" value="ECO:0000266"/>
    <property type="project" value="RGD"/>
</dbReference>
<dbReference type="GO" id="GO:0060718">
    <property type="term" value="P:chorionic trophoblast cell differentiation"/>
    <property type="evidence" value="ECO:0000250"/>
    <property type="project" value="UniProtKB"/>
</dbReference>
<dbReference type="GO" id="GO:0030330">
    <property type="term" value="P:DNA damage response, signal transduction by p53 class mediator"/>
    <property type="evidence" value="ECO:0000250"/>
    <property type="project" value="UniProtKB"/>
</dbReference>
<dbReference type="GO" id="GO:0070365">
    <property type="term" value="P:hepatocyte differentiation"/>
    <property type="evidence" value="ECO:0000250"/>
    <property type="project" value="UniProtKB"/>
</dbReference>
<dbReference type="GO" id="GO:0008285">
    <property type="term" value="P:negative regulation of cell population proliferation"/>
    <property type="evidence" value="ECO:0000266"/>
    <property type="project" value="RGD"/>
</dbReference>
<dbReference type="GO" id="GO:0032466">
    <property type="term" value="P:negative regulation of cytokinesis"/>
    <property type="evidence" value="ECO:0000250"/>
    <property type="project" value="UniProtKB"/>
</dbReference>
<dbReference type="GO" id="GO:2000134">
    <property type="term" value="P:negative regulation of G1/S transition of mitotic cell cycle"/>
    <property type="evidence" value="ECO:0000250"/>
    <property type="project" value="UniProtKB"/>
</dbReference>
<dbReference type="GO" id="GO:0000122">
    <property type="term" value="P:negative regulation of transcription by RNA polymerase II"/>
    <property type="evidence" value="ECO:0000250"/>
    <property type="project" value="UniProtKB"/>
</dbReference>
<dbReference type="GO" id="GO:0001890">
    <property type="term" value="P:placenta development"/>
    <property type="evidence" value="ECO:0000250"/>
    <property type="project" value="UniProtKB"/>
</dbReference>
<dbReference type="GO" id="GO:0032877">
    <property type="term" value="P:positive regulation of DNA endoreduplication"/>
    <property type="evidence" value="ECO:0000250"/>
    <property type="project" value="UniProtKB"/>
</dbReference>
<dbReference type="GO" id="GO:0045944">
    <property type="term" value="P:positive regulation of transcription by RNA polymerase II"/>
    <property type="evidence" value="ECO:0000266"/>
    <property type="project" value="RGD"/>
</dbReference>
<dbReference type="GO" id="GO:0006355">
    <property type="term" value="P:regulation of DNA-templated transcription"/>
    <property type="evidence" value="ECO:0000266"/>
    <property type="project" value="RGD"/>
</dbReference>
<dbReference type="GO" id="GO:0006357">
    <property type="term" value="P:regulation of transcription by RNA polymerase II"/>
    <property type="evidence" value="ECO:0000318"/>
    <property type="project" value="GO_Central"/>
</dbReference>
<dbReference type="GO" id="GO:0002040">
    <property type="term" value="P:sprouting angiogenesis"/>
    <property type="evidence" value="ECO:0000250"/>
    <property type="project" value="UniProtKB"/>
</dbReference>
<dbReference type="GO" id="GO:0060707">
    <property type="term" value="P:trophoblast giant cell differentiation"/>
    <property type="evidence" value="ECO:0000250"/>
    <property type="project" value="UniProtKB"/>
</dbReference>
<dbReference type="FunFam" id="1.10.10.10:FF:000073">
    <property type="entry name" value="E2F transcription factor 8"/>
    <property type="match status" value="1"/>
</dbReference>
<dbReference type="FunFam" id="1.10.10.10:FF:000100">
    <property type="entry name" value="E2F transcription factor 8"/>
    <property type="match status" value="1"/>
</dbReference>
<dbReference type="Gene3D" id="1.10.10.10">
    <property type="entry name" value="Winged helix-like DNA-binding domain superfamily/Winged helix DNA-binding domain"/>
    <property type="match status" value="2"/>
</dbReference>
<dbReference type="InterPro" id="IPR015633">
    <property type="entry name" value="E2F"/>
</dbReference>
<dbReference type="InterPro" id="IPR003316">
    <property type="entry name" value="E2F_WHTH_DNA-bd_dom"/>
</dbReference>
<dbReference type="InterPro" id="IPR036388">
    <property type="entry name" value="WH-like_DNA-bd_sf"/>
</dbReference>
<dbReference type="InterPro" id="IPR036390">
    <property type="entry name" value="WH_DNA-bd_sf"/>
</dbReference>
<dbReference type="PANTHER" id="PTHR12081">
    <property type="entry name" value="TRANSCRIPTION FACTOR E2F"/>
    <property type="match status" value="1"/>
</dbReference>
<dbReference type="PANTHER" id="PTHR12081:SF25">
    <property type="entry name" value="TRANSCRIPTION FACTOR E2F7"/>
    <property type="match status" value="1"/>
</dbReference>
<dbReference type="Pfam" id="PF02319">
    <property type="entry name" value="E2F_TDP"/>
    <property type="match status" value="2"/>
</dbReference>
<dbReference type="SMART" id="SM01372">
    <property type="entry name" value="E2F_TDP"/>
    <property type="match status" value="2"/>
</dbReference>
<dbReference type="SUPFAM" id="SSF46785">
    <property type="entry name" value="Winged helix' DNA-binding domain"/>
    <property type="match status" value="2"/>
</dbReference>
<name>E2F7_RAT</name>
<gene>
    <name type="primary">E2f7</name>
</gene>
<proteinExistence type="inferred from homology"/>
<organism>
    <name type="scientific">Rattus norvegicus</name>
    <name type="common">Rat</name>
    <dbReference type="NCBI Taxonomy" id="10116"/>
    <lineage>
        <taxon>Eukaryota</taxon>
        <taxon>Metazoa</taxon>
        <taxon>Chordata</taxon>
        <taxon>Craniata</taxon>
        <taxon>Vertebrata</taxon>
        <taxon>Euteleostomi</taxon>
        <taxon>Mammalia</taxon>
        <taxon>Eutheria</taxon>
        <taxon>Euarchontoglires</taxon>
        <taxon>Glires</taxon>
        <taxon>Rodentia</taxon>
        <taxon>Myomorpha</taxon>
        <taxon>Muroidea</taxon>
        <taxon>Muridae</taxon>
        <taxon>Murinae</taxon>
        <taxon>Rattus</taxon>
    </lineage>
</organism>
<protein>
    <recommendedName>
        <fullName>Transcription factor E2F7</fullName>
        <shortName>E2F-7</shortName>
    </recommendedName>
</protein>
<sequence>MEVNCLTLKDLISPRQTRLDFAVEDAETAQKENIFVDRSRMTPKTPMKNEPIDLSKQRIFTPERSPITPVKLVDRQPQVEPWTPTANLKMLISAASPDIRDREKKKELFRPIENKGDAFVNSLQLDVVGDSAVDDYEKRRPSRKQKSLGLLCQKFLARYPSYPLSTEKTTISLDEVAVSLGVERRRIYDIVNVLESLHLVSRVAKNQYGWHGRHSLPKTLRTLQRLGEEQKYEEQMACLQQKELDLMEYRFGERRKDGSPDPRDQHLLDFSESDYPSSSANSRKDKSLRIMSQKFVMLFLVSKTKIVTLDVAAKILIEESQDTPDHSKFKTKVRRLYDIANVLTSLALIKKVHVTEERGRKPAFKWIGPVDFSSIDEELLDVSASVLPELKKETYGQIRVCAKERLARYGSFNTVQTSEKIQRKVNSEPSSPQGGKQGPAYSLEIGSLAAIYRQKVEDSSQGEAFVNKRAAPPASVLDPTLPVDSEYCVKPLAQPVFSVAQTDLQAFSAQNGLNGQVGVPVPSAASDAETLKSALLASQPLVYVPSTSLFMLYGSVQEALSPESRSEEDGSGSDVPADLSLAPTAQKRLCEERNPLEDDEPAVKRQSREFEDSPLSLVMPKKPSNSTDLAFPVTTGNGRATPLEDACVKGQLPAAEDASGRAVPNGFIASECGNPSRNPDTEKSSNDNEITKDPSLLQYLYVQSPAGLNGFNMLLPGGQTPHAVAPSSAAMPSFGVPCMFLPSPGLGPFPVLYSPAIPGPISSAPGTLPNTGPMNFGLSTLASASHLLISPAAMVNPKSSTLPSADPQLRCQPPLNPNPVMPGSHGVIHPESPGYMRHPVSMVKAEQSPAPATPKSIQRRHRETFFKTPGSLGDPAFRRERNQSRNTSSAQRRLEISSSGPD</sequence>
<reference key="1">
    <citation type="journal article" date="2004" name="Nature">
        <title>Genome sequence of the Brown Norway rat yields insights into mammalian evolution.</title>
        <authorList>
            <person name="Gibbs R.A."/>
            <person name="Weinstock G.M."/>
            <person name="Metzker M.L."/>
            <person name="Muzny D.M."/>
            <person name="Sodergren E.J."/>
            <person name="Scherer S."/>
            <person name="Scott G."/>
            <person name="Steffen D."/>
            <person name="Worley K.C."/>
            <person name="Burch P.E."/>
            <person name="Okwuonu G."/>
            <person name="Hines S."/>
            <person name="Lewis L."/>
            <person name="Deramo C."/>
            <person name="Delgado O."/>
            <person name="Dugan-Rocha S."/>
            <person name="Miner G."/>
            <person name="Morgan M."/>
            <person name="Hawes A."/>
            <person name="Gill R."/>
            <person name="Holt R.A."/>
            <person name="Adams M.D."/>
            <person name="Amanatides P.G."/>
            <person name="Baden-Tillson H."/>
            <person name="Barnstead M."/>
            <person name="Chin S."/>
            <person name="Evans C.A."/>
            <person name="Ferriera S."/>
            <person name="Fosler C."/>
            <person name="Glodek A."/>
            <person name="Gu Z."/>
            <person name="Jennings D."/>
            <person name="Kraft C.L."/>
            <person name="Nguyen T."/>
            <person name="Pfannkoch C.M."/>
            <person name="Sitter C."/>
            <person name="Sutton G.G."/>
            <person name="Venter J.C."/>
            <person name="Woodage T."/>
            <person name="Smith D."/>
            <person name="Lee H.-M."/>
            <person name="Gustafson E."/>
            <person name="Cahill P."/>
            <person name="Kana A."/>
            <person name="Doucette-Stamm L."/>
            <person name="Weinstock K."/>
            <person name="Fechtel K."/>
            <person name="Weiss R.B."/>
            <person name="Dunn D.M."/>
            <person name="Green E.D."/>
            <person name="Blakesley R.W."/>
            <person name="Bouffard G.G."/>
            <person name="De Jong P.J."/>
            <person name="Osoegawa K."/>
            <person name="Zhu B."/>
            <person name="Marra M."/>
            <person name="Schein J."/>
            <person name="Bosdet I."/>
            <person name="Fjell C."/>
            <person name="Jones S."/>
            <person name="Krzywinski M."/>
            <person name="Mathewson C."/>
            <person name="Siddiqui A."/>
            <person name="Wye N."/>
            <person name="McPherson J."/>
            <person name="Zhao S."/>
            <person name="Fraser C.M."/>
            <person name="Shetty J."/>
            <person name="Shatsman S."/>
            <person name="Geer K."/>
            <person name="Chen Y."/>
            <person name="Abramzon S."/>
            <person name="Nierman W.C."/>
            <person name="Havlak P.H."/>
            <person name="Chen R."/>
            <person name="Durbin K.J."/>
            <person name="Egan A."/>
            <person name="Ren Y."/>
            <person name="Song X.-Z."/>
            <person name="Li B."/>
            <person name="Liu Y."/>
            <person name="Qin X."/>
            <person name="Cawley S."/>
            <person name="Cooney A.J."/>
            <person name="D'Souza L.M."/>
            <person name="Martin K."/>
            <person name="Wu J.Q."/>
            <person name="Gonzalez-Garay M.L."/>
            <person name="Jackson A.R."/>
            <person name="Kalafus K.J."/>
            <person name="McLeod M.P."/>
            <person name="Milosavljevic A."/>
            <person name="Virk D."/>
            <person name="Volkov A."/>
            <person name="Wheeler D.A."/>
            <person name="Zhang Z."/>
            <person name="Bailey J.A."/>
            <person name="Eichler E.E."/>
            <person name="Tuzun E."/>
            <person name="Birney E."/>
            <person name="Mongin E."/>
            <person name="Ureta-Vidal A."/>
            <person name="Woodwark C."/>
            <person name="Zdobnov E."/>
            <person name="Bork P."/>
            <person name="Suyama M."/>
            <person name="Torrents D."/>
            <person name="Alexandersson M."/>
            <person name="Trask B.J."/>
            <person name="Young J.M."/>
            <person name="Huang H."/>
            <person name="Wang H."/>
            <person name="Xing H."/>
            <person name="Daniels S."/>
            <person name="Gietzen D."/>
            <person name="Schmidt J."/>
            <person name="Stevens K."/>
            <person name="Vitt U."/>
            <person name="Wingrove J."/>
            <person name="Camara F."/>
            <person name="Mar Alba M."/>
            <person name="Abril J.F."/>
            <person name="Guigo R."/>
            <person name="Smit A."/>
            <person name="Dubchak I."/>
            <person name="Rubin E.M."/>
            <person name="Couronne O."/>
            <person name="Poliakov A."/>
            <person name="Huebner N."/>
            <person name="Ganten D."/>
            <person name="Goesele C."/>
            <person name="Hummel O."/>
            <person name="Kreitler T."/>
            <person name="Lee Y.-A."/>
            <person name="Monti J."/>
            <person name="Schulz H."/>
            <person name="Zimdahl H."/>
            <person name="Himmelbauer H."/>
            <person name="Lehrach H."/>
            <person name="Jacob H.J."/>
            <person name="Bromberg S."/>
            <person name="Gullings-Handley J."/>
            <person name="Jensen-Seaman M.I."/>
            <person name="Kwitek A.E."/>
            <person name="Lazar J."/>
            <person name="Pasko D."/>
            <person name="Tonellato P.J."/>
            <person name="Twigger S."/>
            <person name="Ponting C.P."/>
            <person name="Duarte J.M."/>
            <person name="Rice S."/>
            <person name="Goodstadt L."/>
            <person name="Beatson S.A."/>
            <person name="Emes R.D."/>
            <person name="Winter E.E."/>
            <person name="Webber C."/>
            <person name="Brandt P."/>
            <person name="Nyakatura G."/>
            <person name="Adetobi M."/>
            <person name="Chiaromonte F."/>
            <person name="Elnitski L."/>
            <person name="Eswara P."/>
            <person name="Hardison R.C."/>
            <person name="Hou M."/>
            <person name="Kolbe D."/>
            <person name="Makova K."/>
            <person name="Miller W."/>
            <person name="Nekrutenko A."/>
            <person name="Riemer C."/>
            <person name="Schwartz S."/>
            <person name="Taylor J."/>
            <person name="Yang S."/>
            <person name="Zhang Y."/>
            <person name="Lindpaintner K."/>
            <person name="Andrews T.D."/>
            <person name="Caccamo M."/>
            <person name="Clamp M."/>
            <person name="Clarke L."/>
            <person name="Curwen V."/>
            <person name="Durbin R.M."/>
            <person name="Eyras E."/>
            <person name="Searle S.M."/>
            <person name="Cooper G.M."/>
            <person name="Batzoglou S."/>
            <person name="Brudno M."/>
            <person name="Sidow A."/>
            <person name="Stone E.A."/>
            <person name="Payseur B.A."/>
            <person name="Bourque G."/>
            <person name="Lopez-Otin C."/>
            <person name="Puente X.S."/>
            <person name="Chakrabarti K."/>
            <person name="Chatterji S."/>
            <person name="Dewey C."/>
            <person name="Pachter L."/>
            <person name="Bray N."/>
            <person name="Yap V.B."/>
            <person name="Caspi A."/>
            <person name="Tesler G."/>
            <person name="Pevzner P.A."/>
            <person name="Haussler D."/>
            <person name="Roskin K.M."/>
            <person name="Baertsch R."/>
            <person name="Clawson H."/>
            <person name="Furey T.S."/>
            <person name="Hinrichs A.S."/>
            <person name="Karolchik D."/>
            <person name="Kent W.J."/>
            <person name="Rosenbloom K.R."/>
            <person name="Trumbower H."/>
            <person name="Weirauch M."/>
            <person name="Cooper D.N."/>
            <person name="Stenson P.D."/>
            <person name="Ma B."/>
            <person name="Brent M."/>
            <person name="Arumugam M."/>
            <person name="Shteynberg D."/>
            <person name="Copley R.R."/>
            <person name="Taylor M.S."/>
            <person name="Riethman H."/>
            <person name="Mudunuri U."/>
            <person name="Peterson J."/>
            <person name="Guyer M."/>
            <person name="Felsenfeld A."/>
            <person name="Old S."/>
            <person name="Mockrin S."/>
            <person name="Collins F.S."/>
        </authorList>
    </citation>
    <scope>NUCLEOTIDE SEQUENCE [LARGE SCALE GENOMIC DNA]</scope>
    <source>
        <strain>Brown Norway</strain>
    </source>
</reference>
<evidence type="ECO:0000250" key="1"/>
<evidence type="ECO:0000250" key="2">
    <source>
        <dbReference type="UniProtKB" id="Q96AV8"/>
    </source>
</evidence>
<evidence type="ECO:0000255" key="3"/>
<evidence type="ECO:0000256" key="4">
    <source>
        <dbReference type="SAM" id="MobiDB-lite"/>
    </source>
</evidence>
<evidence type="ECO:0000305" key="5"/>
<accession>D4A4D7</accession>
<comment type="function">
    <text evidence="1">Atypical E2F transcription factor that participates in various processes such as angiogenesis, polyploidization of specialized cells and DNA damage response. Mainly acts as a transcription repressor that binds DNA independently of DP proteins and specifically recognizes the E2 recognition site 5'-TTTC[CG]CGC-3'. Directly represses transcription of classical E2F transcription factors such as E2F1. Acts as a regulator of S-phase by recognizing and binding the E2-related site 5'-TTCCCGCC-3' and mediating repression of G1/S-regulated genes. Plays a key role in polyploidization of cells in placenta and liver by regulating the endocycle, probably by repressing genes promoting cytokinesis and antagonizing action of classical E2F proteins (E2F1, E2F2 and/or E2F3). Required for placental development by promoting polyploidization of trophoblast giant cells. Also involved in DNA damage response: up-regulated by p53/TP53 following genotoxic stress and acts as a downstream effector of p53/TP53-dependent repression by mediating repression of indirect p53/TP53 target genes involved in DNA replication. Acts as a promoter of sprouting angiogenesis, possibly by acting as a transcription activator: associates with HIF1A, recognizes and binds the VEGFA promoter, which is different from canonical E2 recognition site, and activates expression of the VEGFA gene. Acts as a negative regulator of keratinocyte differentiation (By similarity).</text>
</comment>
<comment type="subunit">
    <text evidence="1 2">Homodimer and heterodimer: mainly forms homodimers and, to a lesser extent, heterodimers with E2F8. Dimerization is important for DNA-binding. Interacts with HIF1A (By similarity). Interacts with MN1 (By similarity).</text>
</comment>
<comment type="subcellular location">
    <subcellularLocation>
        <location evidence="1">Nucleus</location>
    </subcellularLocation>
</comment>
<comment type="domain">
    <text evidence="1">In contrast to classical members of the E2F transcription factor, atypical members contain 2 DNA-binding domains and regulate transcription in a DP-independent manner. Both DNA-binding domains are required for DNA-binding and are proposed to form an intramolecular structure that is similar to the winged helix structure of the E2F-DP heterodimer (By similarity).</text>
</comment>
<comment type="similarity">
    <text evidence="5">Belongs to the E2F/DP family.</text>
</comment>